<sequence length="1225" mass="133951">MFSYSQAIRFIIFLLPICLTFKITENRIDRGKLNFEIQDITIKSGAFWSIVDNSICTFFGSLMVEPQASLYVSSTSPILALQVAFVSILGVFHNQGNITFDSSASLTSATYRIITSTFRNTGRMFFSASGKFPNTMDIVASDWTNNGLLSFHQDQRTSGVVSLGSALGTITNNGQIKLSNQVYQQRTQISGSGCFVAINNSTIYISNSLLPVQITQSFYLADSTSSIIVDSFSATQTFNVYGFGNGNMIGLTLPLVGNYWYSSYTYDATTGILIMRNVFLEQKFNIGLGYNPSLFKIVTDWGAGIPSTILGSLSYSGCVPSRRLPSICQIDPISSLEIPGTKPTQFTSVFVSTDDSGRNGQYVGLFEVATNKNYEWVSAVIIITSIPTVTIELPPTLTLEAQWLPTVSGVLHTSSTITQSTKIGLLTTVSLVPVAETQLASRTFSIVGPPIPDTTSLELVVPTKSETRVVTESTVVPVLPPKVTHFTNSSTSNRRYSSESMVDEEFPSEPFMSDEVSIEVYESYTDESCVISTDFSVDVDYSSDLSMNFQTYDTLDTTEMFNTVENFETYDTFGTIESFDIFETSQTFESYETFNETSDLSMFSLTSESFSDLPPPLVQTDTPVSFNPVPSRTNMSEKTIMWEVTNSQGSIITESGIILISGEYQTTVTTFLRDLDQMEGYTKYTKTWEVTNSNGSVVTESGIIDESGSYHTTVTTFPQKDQNWEWAANTVEYTKTWIVTNEDGSIITESGIVGESGLYQTTVTTFPHELSSFTIYQSEEAHSPGVINAGDIESTPLATSSSIYQSVIIEDEFPSSPGNTYTDVFSPTTGHDLDLPDDTTFTPSQSSSTTVPIESEYISESIILDAGSSVSTMISPTTLTTNFPIFDSSDNQFKHVSLWDSRVSSRSIVIVSSEFPESDAPLILASPNDGSSNQTSTTASITVNDNQNINNPEFQQGEAVISSSIDSSVSHLYYISEETSIASNNGDLSDDLEVDFILLTSLHDTISAKATSAGYSWKFYPESDEIQIDQTGDYNYSLAGAKTHIHESAYTQQDASTQKGASVQQETSIQQRVSTKQETYTQEGTQQVTRTQEKVQQGASHSTTNSHFEGTFISKTASPTNNDFTLSFEPKDNATDISNSFFAHLSIVGNSTVFETDYTDFSFIANSNTFKSDANGVDSTSNQTYSAGVGGSNVSGLISKSESVVLLIRPVMIFVFLAICVVIML</sequence>
<dbReference type="EMBL" id="CP017630">
    <property type="protein sequence ID" value="AOW30843.1"/>
    <property type="molecule type" value="Genomic_DNA"/>
</dbReference>
<dbReference type="RefSeq" id="XP_717969.1">
    <property type="nucleotide sequence ID" value="XM_712876.1"/>
</dbReference>
<dbReference type="SMR" id="Q5A849"/>
<dbReference type="STRING" id="237561.Q5A849"/>
<dbReference type="GlyCosmos" id="Q5A849">
    <property type="glycosylation" value="12 sites, No reported glycans"/>
</dbReference>
<dbReference type="EnsemblFungi" id="CR_00760C_A-T">
    <property type="protein sequence ID" value="CR_00760C_A-T-p1"/>
    <property type="gene ID" value="CR_00760C_A"/>
</dbReference>
<dbReference type="GeneID" id="3640436"/>
<dbReference type="KEGG" id="cal:CAALFM_CR00760CA"/>
<dbReference type="CGD" id="CAL0000179460">
    <property type="gene designation" value="HYR4"/>
</dbReference>
<dbReference type="VEuPathDB" id="FungiDB:CR_00760C_A"/>
<dbReference type="HOGENOM" id="CLU_268223_0_0_1"/>
<dbReference type="InParanoid" id="Q5A849"/>
<dbReference type="OMA" id="HIHESAY"/>
<dbReference type="OrthoDB" id="4022214at2759"/>
<dbReference type="PRO" id="PR:Q5A849"/>
<dbReference type="Proteomes" id="UP000000559">
    <property type="component" value="Chromosome R"/>
</dbReference>
<dbReference type="GO" id="GO:0009986">
    <property type="term" value="C:cell surface"/>
    <property type="evidence" value="ECO:0000314"/>
    <property type="project" value="CGD"/>
</dbReference>
<dbReference type="GO" id="GO:0005576">
    <property type="term" value="C:extracellular region"/>
    <property type="evidence" value="ECO:0007669"/>
    <property type="project" value="UniProtKB-KW"/>
</dbReference>
<dbReference type="GO" id="GO:0009277">
    <property type="term" value="C:fungal-type cell wall"/>
    <property type="evidence" value="ECO:0000314"/>
    <property type="project" value="CGD"/>
</dbReference>
<dbReference type="GO" id="GO:0098552">
    <property type="term" value="C:side of membrane"/>
    <property type="evidence" value="ECO:0007669"/>
    <property type="project" value="UniProtKB-KW"/>
</dbReference>
<dbReference type="InterPro" id="IPR031573">
    <property type="entry name" value="Cell_wall_rpt"/>
</dbReference>
<dbReference type="InterPro" id="IPR021031">
    <property type="entry name" value="Hyphal-reg_cell_wall_N"/>
</dbReference>
<dbReference type="Pfam" id="PF11765">
    <property type="entry name" value="Hyphal_reg_CWP"/>
    <property type="match status" value="1"/>
</dbReference>
<dbReference type="Pfam" id="PF15789">
    <property type="entry name" value="Hyr1"/>
    <property type="match status" value="2"/>
</dbReference>
<protein>
    <recommendedName>
        <fullName>Hyphally regulated cell wall protein 4</fullName>
    </recommendedName>
    <alternativeName>
        <fullName>Adhesin-like protein HYR4</fullName>
    </alternativeName>
</protein>
<name>HYR4_CANAL</name>
<organism>
    <name type="scientific">Candida albicans (strain SC5314 / ATCC MYA-2876)</name>
    <name type="common">Yeast</name>
    <dbReference type="NCBI Taxonomy" id="237561"/>
    <lineage>
        <taxon>Eukaryota</taxon>
        <taxon>Fungi</taxon>
        <taxon>Dikarya</taxon>
        <taxon>Ascomycota</taxon>
        <taxon>Saccharomycotina</taxon>
        <taxon>Pichiomycetes</taxon>
        <taxon>Debaryomycetaceae</taxon>
        <taxon>Candida/Lodderomyces clade</taxon>
        <taxon>Candida</taxon>
    </lineage>
</organism>
<gene>
    <name type="primary">HYR4</name>
    <name type="synonym">HYR8</name>
    <name type="synonym">IFF7</name>
    <name type="ordered locus">CAALFM_CR00760CA</name>
    <name type="ORF">CaO19.10789</name>
    <name type="ORF">CaO19.3279</name>
</gene>
<comment type="function">
    <text evidence="1">GPI-anchored cell wall protein involved in cell wall organization, hyphal growth, as well as in host-fungal interaction and virulence.</text>
</comment>
<comment type="subcellular location">
    <subcellularLocation>
        <location evidence="5">Secreted</location>
        <location evidence="5">Cell wall</location>
    </subcellularLocation>
    <subcellularLocation>
        <location evidence="6">Membrane</location>
        <topology evidence="6">Lipid-anchor</topology>
        <topology evidence="6">GPI-anchor</topology>
    </subcellularLocation>
</comment>
<comment type="induction">
    <text evidence="4">Constitutive expression independent of white/opaque switching or mating type locus.</text>
</comment>
<comment type="PTM">
    <text>The GPI-anchor is attached to the protein in the endoplasmic reticulum and serves to target the protein to the cell surface. There, the glucosamine-inositol phospholipid moiety is cleaved off and the GPI-modified mannoprotein is covalently attached via its lipidless GPI glycan remnant to the 1,6-beta-glucan of the outer cell wall layer.</text>
</comment>
<comment type="similarity">
    <text evidence="6">Belongs to the HYR1/IFF family.</text>
</comment>
<reference key="1">
    <citation type="journal article" date="2004" name="Proc. Natl. Acad. Sci. U.S.A.">
        <title>The diploid genome sequence of Candida albicans.</title>
        <authorList>
            <person name="Jones T."/>
            <person name="Federspiel N.A."/>
            <person name="Chibana H."/>
            <person name="Dungan J."/>
            <person name="Kalman S."/>
            <person name="Magee B.B."/>
            <person name="Newport G."/>
            <person name="Thorstenson Y.R."/>
            <person name="Agabian N."/>
            <person name="Magee P.T."/>
            <person name="Davis R.W."/>
            <person name="Scherer S."/>
        </authorList>
    </citation>
    <scope>NUCLEOTIDE SEQUENCE [LARGE SCALE GENOMIC DNA]</scope>
    <source>
        <strain>SC5314 / ATCC MYA-2876</strain>
    </source>
</reference>
<reference key="2">
    <citation type="journal article" date="2007" name="Genome Biol.">
        <title>Assembly of the Candida albicans genome into sixteen supercontigs aligned on the eight chromosomes.</title>
        <authorList>
            <person name="van het Hoog M."/>
            <person name="Rast T.J."/>
            <person name="Martchenko M."/>
            <person name="Grindle S."/>
            <person name="Dignard D."/>
            <person name="Hogues H."/>
            <person name="Cuomo C."/>
            <person name="Berriman M."/>
            <person name="Scherer S."/>
            <person name="Magee B.B."/>
            <person name="Whiteway M."/>
            <person name="Chibana H."/>
            <person name="Nantel A."/>
            <person name="Magee P.T."/>
        </authorList>
    </citation>
    <scope>GENOME REANNOTATION</scope>
    <source>
        <strain>SC5314 / ATCC MYA-2876</strain>
    </source>
</reference>
<reference key="3">
    <citation type="journal article" date="2013" name="Genome Biol.">
        <title>Assembly of a phased diploid Candida albicans genome facilitates allele-specific measurements and provides a simple model for repeat and indel structure.</title>
        <authorList>
            <person name="Muzzey D."/>
            <person name="Schwartz K."/>
            <person name="Weissman J.S."/>
            <person name="Sherlock G."/>
        </authorList>
    </citation>
    <scope>NUCLEOTIDE SEQUENCE [LARGE SCALE GENOMIC DNA]</scope>
    <scope>GENOME REANNOTATION</scope>
    <source>
        <strain>SC5314 / ATCC MYA-2876</strain>
    </source>
</reference>
<reference key="4">
    <citation type="journal article" date="2003" name="Yeast">
        <title>An analysis of the Candida albicans genome database for soluble secreted proteins using computer-based prediction algorithms.</title>
        <authorList>
            <person name="Lee S.A."/>
            <person name="Wormsley S."/>
            <person name="Kamoun S."/>
            <person name="Lee A.F."/>
            <person name="Joiner K."/>
            <person name="Wong B."/>
        </authorList>
    </citation>
    <scope>PREDICTION OF GPI-ANCHOR</scope>
</reference>
<reference key="5">
    <citation type="journal article" date="2006" name="Eukaryot. Cell">
        <title>TOS9 regulates white-opaque switching in Candida albicans.</title>
        <authorList>
            <person name="Srikantha T."/>
            <person name="Borneman A.R."/>
            <person name="Daniels K.J."/>
            <person name="Pujol C."/>
            <person name="Wu W."/>
            <person name="Seringhaus M.R."/>
            <person name="Gerstein M."/>
            <person name="Yi S."/>
            <person name="Snyder M."/>
            <person name="Soll D.R."/>
        </authorList>
    </citation>
    <scope>INDUCTION</scope>
</reference>
<reference key="6">
    <citation type="journal article" date="2007" name="Infect. Immun.">
        <title>Candida albicans Iff11, a secreted protein required for cell wall structure and virulence.</title>
        <authorList>
            <person name="Bates S."/>
            <person name="de la Rosa J.M."/>
            <person name="MacCallum D.M."/>
            <person name="Brown A.J."/>
            <person name="Gow N.A."/>
            <person name="Odds F.C."/>
        </authorList>
    </citation>
    <scope>IDENTIFICATION IN THE HYR1/IFF FAMILY</scope>
</reference>
<reference key="7">
    <citation type="journal article" date="2011" name="Eukaryot. Cell">
        <title>Unexpected role for a serine/threonine-rich domain in the Candida albicans Iff protein family.</title>
        <authorList>
            <person name="Boisrame A."/>
            <person name="Cornu A."/>
            <person name="Da Costa G."/>
            <person name="Richard M.L."/>
        </authorList>
    </citation>
    <scope>SUBCELLULAR LOCATION</scope>
</reference>
<accession>Q5A849</accession>
<accession>A0A1D8PRV1</accession>
<feature type="signal peptide" evidence="2">
    <location>
        <begin position="1"/>
        <end position="20"/>
    </location>
</feature>
<feature type="chain" id="PRO_0000424756" description="Hyphally regulated cell wall protein 4">
    <location>
        <begin position="21"/>
        <end position="1195"/>
    </location>
</feature>
<feature type="propeptide" id="PRO_0000424757" description="Removed in mature form" evidence="2">
    <location>
        <begin position="1196"/>
        <end position="1225"/>
    </location>
</feature>
<feature type="region of interest" description="Disordered" evidence="3">
    <location>
        <begin position="832"/>
        <end position="852"/>
    </location>
</feature>
<feature type="region of interest" description="Disordered" evidence="3">
    <location>
        <begin position="1049"/>
        <end position="1114"/>
    </location>
</feature>
<feature type="compositionally biased region" description="Low complexity" evidence="3">
    <location>
        <begin position="838"/>
        <end position="852"/>
    </location>
</feature>
<feature type="lipid moiety-binding region" description="GPI-anchor amidated serine" evidence="2">
    <location>
        <position position="1195"/>
    </location>
</feature>
<feature type="glycosylation site" description="N-linked (GlcNAc...) asparagine" evidence="2">
    <location>
        <position position="97"/>
    </location>
</feature>
<feature type="glycosylation site" description="N-linked (GlcNAc...) asparagine" evidence="2">
    <location>
        <position position="200"/>
    </location>
</feature>
<feature type="glycosylation site" description="N-linked (GlcNAc...) asparagine" evidence="2">
    <location>
        <position position="488"/>
    </location>
</feature>
<feature type="glycosylation site" description="N-linked (GlcNAc...) asparagine" evidence="2">
    <location>
        <position position="595"/>
    </location>
</feature>
<feature type="glycosylation site" description="N-linked (GlcNAc...) asparagine" evidence="2">
    <location>
        <position position="634"/>
    </location>
</feature>
<feature type="glycosylation site" description="N-linked (GlcNAc...) asparagine" evidence="2">
    <location>
        <position position="694"/>
    </location>
</feature>
<feature type="glycosylation site" description="N-linked (GlcNAc...) asparagine" evidence="2">
    <location>
        <position position="933"/>
    </location>
</feature>
<feature type="glycosylation site" description="N-linked (GlcNAc...) asparagine" evidence="2">
    <location>
        <position position="1035"/>
    </location>
</feature>
<feature type="glycosylation site" description="N-linked (GlcNAc...) asparagine" evidence="2">
    <location>
        <position position="1133"/>
    </location>
</feature>
<feature type="glycosylation site" description="N-linked (GlcNAc...) asparagine" evidence="2">
    <location>
        <position position="1150"/>
    </location>
</feature>
<feature type="glycosylation site" description="N-linked (GlcNAc...) asparagine" evidence="2">
    <location>
        <position position="1182"/>
    </location>
</feature>
<feature type="glycosylation site" description="N-linked (GlcNAc...) asparagine" evidence="2">
    <location>
        <position position="1193"/>
    </location>
</feature>
<evidence type="ECO:0000250" key="1"/>
<evidence type="ECO:0000255" key="2"/>
<evidence type="ECO:0000256" key="3">
    <source>
        <dbReference type="SAM" id="MobiDB-lite"/>
    </source>
</evidence>
<evidence type="ECO:0000269" key="4">
    <source>
    </source>
</evidence>
<evidence type="ECO:0000269" key="5">
    <source>
    </source>
</evidence>
<evidence type="ECO:0000305" key="6"/>
<keyword id="KW-0134">Cell wall</keyword>
<keyword id="KW-0325">Glycoprotein</keyword>
<keyword id="KW-0336">GPI-anchor</keyword>
<keyword id="KW-0449">Lipoprotein</keyword>
<keyword id="KW-0472">Membrane</keyword>
<keyword id="KW-1185">Reference proteome</keyword>
<keyword id="KW-0964">Secreted</keyword>
<keyword id="KW-0732">Signal</keyword>
<keyword id="KW-0843">Virulence</keyword>
<proteinExistence type="evidence at protein level"/>